<comment type="function">
    <text evidence="4">Water channel required to facilitate the transport of water across cell membrane. Active as heteromers with PIP1-2, but not as homomers.</text>
</comment>
<comment type="subunit">
    <text evidence="4">May interact with PIP1-2 to form heteromers.</text>
</comment>
<comment type="subcellular location">
    <subcellularLocation>
        <location evidence="1">Cell membrane</location>
        <topology evidence="1">Multi-pass membrane protein</topology>
    </subcellularLocation>
</comment>
<comment type="tissue specificity">
    <text evidence="3">Highly expressed in roots, shoots and developing tassels, and at lower levels in leaves.</text>
</comment>
<comment type="induction">
    <text evidence="5">Expressed in roots with a circadian rhythm showing an increase at the end of the night period, a peak during the first part of the light period and then a decrease.</text>
</comment>
<comment type="domain">
    <text>Aquaporins contain two tandem repeats each containing three membrane-spanning domains and a pore-forming loop with the signature motif Asn-Pro-Ala (NPA).</text>
</comment>
<comment type="similarity">
    <text evidence="6">Belongs to the MIP/aquaporin (TC 1.A.8) family. PIP (TC 1.A.8.11) subfamily.</text>
</comment>
<keyword id="KW-1003">Cell membrane</keyword>
<keyword id="KW-0472">Membrane</keyword>
<keyword id="KW-1185">Reference proteome</keyword>
<keyword id="KW-0677">Repeat</keyword>
<keyword id="KW-0812">Transmembrane</keyword>
<keyword id="KW-1133">Transmembrane helix</keyword>
<keyword id="KW-0813">Transport</keyword>
<feature type="chain" id="PRO_0000286013" description="Aquaporin PIP1-1">
    <location>
        <begin position="1"/>
        <end position="287"/>
    </location>
</feature>
<feature type="transmembrane region" description="Helical; Name=1" evidence="2">
    <location>
        <begin position="57"/>
        <end position="77"/>
    </location>
</feature>
<feature type="transmembrane region" description="Helical; Name=2" evidence="2">
    <location>
        <begin position="92"/>
        <end position="114"/>
    </location>
</feature>
<feature type="transmembrane region" description="Helical; Name=3" evidence="2">
    <location>
        <begin position="134"/>
        <end position="154"/>
    </location>
</feature>
<feature type="transmembrane region" description="Helical; Name=4" evidence="2">
    <location>
        <begin position="176"/>
        <end position="196"/>
    </location>
</feature>
<feature type="transmembrane region" description="Helical; Name=5" evidence="2">
    <location>
        <begin position="210"/>
        <end position="230"/>
    </location>
</feature>
<feature type="transmembrane region" description="Helical; Name=6" evidence="2">
    <location>
        <begin position="258"/>
        <end position="278"/>
    </location>
</feature>
<feature type="short sequence motif" description="NPA 1" evidence="1">
    <location>
        <begin position="115"/>
        <end position="117"/>
    </location>
</feature>
<feature type="short sequence motif" description="NPA 2" evidence="1">
    <location>
        <begin position="236"/>
        <end position="238"/>
    </location>
</feature>
<feature type="mutagenesis site" description="Active as heteromers with PIP2-5; when associated with R-249; D-250 and N-254." evidence="4">
    <original>V</original>
    <variation>I</variation>
    <location>
        <position position="245"/>
    </location>
</feature>
<feature type="mutagenesis site" description="Active as heteromers with PIP2-5; when associated with V-245; D-250 and N-254." evidence="4">
    <original>Q</original>
    <variation>R</variation>
    <location>
        <position position="249"/>
    </location>
</feature>
<feature type="mutagenesis site" description="Active as heteromers with PIP2-5; when associated with V-245; R-249; and N-254." evidence="4">
    <original>H</original>
    <variation>D</variation>
    <location>
        <position position="250"/>
    </location>
</feature>
<feature type="mutagenesis site" description="Active as heteromers with PIP2-5; when associated with V-245; R-249 and D-250." evidence="4">
    <original>A</original>
    <variation>N</variation>
    <location>
        <position position="254"/>
    </location>
</feature>
<organism>
    <name type="scientific">Zea mays</name>
    <name type="common">Maize</name>
    <dbReference type="NCBI Taxonomy" id="4577"/>
    <lineage>
        <taxon>Eukaryota</taxon>
        <taxon>Viridiplantae</taxon>
        <taxon>Streptophyta</taxon>
        <taxon>Embryophyta</taxon>
        <taxon>Tracheophyta</taxon>
        <taxon>Spermatophyta</taxon>
        <taxon>Magnoliopsida</taxon>
        <taxon>Liliopsida</taxon>
        <taxon>Poales</taxon>
        <taxon>Poaceae</taxon>
        <taxon>PACMAD clade</taxon>
        <taxon>Panicoideae</taxon>
        <taxon>Andropogonodae</taxon>
        <taxon>Andropogoneae</taxon>
        <taxon>Tripsacinae</taxon>
        <taxon>Zea</taxon>
    </lineage>
</organism>
<sequence length="287" mass="30885">MEGKEEDVRLGANKFSERHAIGTAAQGTDDKDYKEPPPAPLFEPGELKSWSFYRPGIAEFVATFLFLYISILTVMGVSKSTSKCATVGIQGIAWSFGGMILALVYCTAGISGHINPAVTFGLFLARKLSLTRAVFYIIMQCLGAICGRGVVKGFQQGLYMGNGGRRNVVAPGYTKGDGLGAEIVGTFILVYTVFSATDAKRRARDSHVPILAPLPIGFAVFLVHLATMGITGTGINPARSLGAAVIYNQHHAWADHWIFWVGPFIGAALAAIYHQVIIRAIPFKSRS</sequence>
<dbReference type="EMBL" id="X82633">
    <property type="protein sequence ID" value="CAA57955.1"/>
    <property type="molecule type" value="mRNA"/>
</dbReference>
<dbReference type="PIR" id="S60455">
    <property type="entry name" value="S60455"/>
</dbReference>
<dbReference type="SMR" id="Q41870"/>
<dbReference type="STRING" id="4577.Q41870"/>
<dbReference type="InParanoid" id="Q41870"/>
<dbReference type="Proteomes" id="UP000007305">
    <property type="component" value="Unplaced"/>
</dbReference>
<dbReference type="ExpressionAtlas" id="Q41870">
    <property type="expression patterns" value="baseline and differential"/>
</dbReference>
<dbReference type="GO" id="GO:0005829">
    <property type="term" value="C:cytosol"/>
    <property type="evidence" value="ECO:0000314"/>
    <property type="project" value="AgBase"/>
</dbReference>
<dbReference type="GO" id="GO:0016020">
    <property type="term" value="C:membrane"/>
    <property type="evidence" value="ECO:0000304"/>
    <property type="project" value="AgBase"/>
</dbReference>
<dbReference type="GO" id="GO:0005886">
    <property type="term" value="C:plasma membrane"/>
    <property type="evidence" value="ECO:0000314"/>
    <property type="project" value="AgBase"/>
</dbReference>
<dbReference type="GO" id="GO:0032991">
    <property type="term" value="C:protein-containing complex"/>
    <property type="evidence" value="ECO:0000304"/>
    <property type="project" value="AgBase"/>
</dbReference>
<dbReference type="GO" id="GO:0015250">
    <property type="term" value="F:water channel activity"/>
    <property type="evidence" value="ECO:0000318"/>
    <property type="project" value="GO_Central"/>
</dbReference>
<dbReference type="GO" id="GO:0051290">
    <property type="term" value="P:protein heterotetramerization"/>
    <property type="evidence" value="ECO:0000304"/>
    <property type="project" value="AgBase"/>
</dbReference>
<dbReference type="GO" id="GO:0051289">
    <property type="term" value="P:protein homotetramerization"/>
    <property type="evidence" value="ECO:0000304"/>
    <property type="project" value="AgBase"/>
</dbReference>
<dbReference type="GO" id="GO:0009414">
    <property type="term" value="P:response to water deprivation"/>
    <property type="evidence" value="ECO:0000318"/>
    <property type="project" value="GO_Central"/>
</dbReference>
<dbReference type="CDD" id="cd00333">
    <property type="entry name" value="MIP"/>
    <property type="match status" value="1"/>
</dbReference>
<dbReference type="FunFam" id="1.20.1080.10:FF:000001">
    <property type="entry name" value="Probable aquaporin PIP1-2"/>
    <property type="match status" value="1"/>
</dbReference>
<dbReference type="Gene3D" id="1.20.1080.10">
    <property type="entry name" value="Glycerol uptake facilitator protein"/>
    <property type="match status" value="1"/>
</dbReference>
<dbReference type="InterPro" id="IPR023271">
    <property type="entry name" value="Aquaporin-like"/>
</dbReference>
<dbReference type="InterPro" id="IPR034294">
    <property type="entry name" value="Aquaporin_transptr"/>
</dbReference>
<dbReference type="InterPro" id="IPR000425">
    <property type="entry name" value="MIP"/>
</dbReference>
<dbReference type="InterPro" id="IPR022357">
    <property type="entry name" value="MIP_CS"/>
</dbReference>
<dbReference type="NCBIfam" id="TIGR00861">
    <property type="entry name" value="MIP"/>
    <property type="match status" value="1"/>
</dbReference>
<dbReference type="PANTHER" id="PTHR45687">
    <property type="entry name" value="AQUAPORIN OR AQUAGLYCEROPORIN RELATED"/>
    <property type="match status" value="1"/>
</dbReference>
<dbReference type="Pfam" id="PF00230">
    <property type="entry name" value="MIP"/>
    <property type="match status" value="1"/>
</dbReference>
<dbReference type="PRINTS" id="PR00783">
    <property type="entry name" value="MINTRINSICP"/>
</dbReference>
<dbReference type="SUPFAM" id="SSF81338">
    <property type="entry name" value="Aquaporin-like"/>
    <property type="match status" value="1"/>
</dbReference>
<dbReference type="PROSITE" id="PS00221">
    <property type="entry name" value="MIP"/>
    <property type="match status" value="1"/>
</dbReference>
<proteinExistence type="evidence at protein level"/>
<protein>
    <recommendedName>
        <fullName>Aquaporin PIP1-1</fullName>
    </recommendedName>
    <alternativeName>
        <fullName>Plasma membrane intrinsic protein 1-1</fullName>
    </alternativeName>
    <alternativeName>
        <fullName>ZmPIP1-1</fullName>
    </alternativeName>
    <alternativeName>
        <fullName>ZmPIP1;1</fullName>
    </alternativeName>
    <alternativeName>
        <fullName>ZmPIP1a</fullName>
    </alternativeName>
</protein>
<accession>Q41870</accession>
<evidence type="ECO:0000250" key="1"/>
<evidence type="ECO:0000255" key="2"/>
<evidence type="ECO:0000269" key="3">
    <source>
    </source>
</evidence>
<evidence type="ECO:0000269" key="4">
    <source>
    </source>
</evidence>
<evidence type="ECO:0000269" key="5">
    <source>
    </source>
</evidence>
<evidence type="ECO:0000305" key="6"/>
<gene>
    <name type="primary">PIP1-1</name>
</gene>
<name>PIP11_MAIZE</name>
<reference key="1">
    <citation type="journal article" date="1995" name="Plant Mol. Biol.">
        <title>Molecular cloning and characterization of six cDNAs expressed during glucose starvation in excised maize (Zea mays L.) root tips.</title>
        <authorList>
            <person name="Chevalier C."/>
            <person name="Bourgeois E."/>
            <person name="Pradet A."/>
            <person name="Raymond P."/>
        </authorList>
    </citation>
    <scope>NUCLEOTIDE SEQUENCE [MRNA]</scope>
    <source>
        <strain>cv. DEA</strain>
        <tissue>Root meristem</tissue>
    </source>
</reference>
<reference key="2">
    <citation type="journal article" date="2000" name="Plant Physiol.">
        <title>Plasma membrane intrinsic proteins from maize cluster in two sequence subgroups with differential aquaporin activity.</title>
        <authorList>
            <person name="Chaumont F."/>
            <person name="Barrieu F."/>
            <person name="Jung R."/>
            <person name="Chrispeels M.J."/>
        </authorList>
    </citation>
    <scope>TISSUE SPECIFICITY</scope>
</reference>
<reference key="3">
    <citation type="journal article" date="2001" name="Plant Physiol.">
        <title>Aquaporins constitute a large and highly divergent protein family in maize.</title>
        <authorList>
            <person name="Chaumont F."/>
            <person name="Barrieu F."/>
            <person name="Wojcik E."/>
            <person name="Chrispeels M.J."/>
            <person name="Jung R."/>
        </authorList>
    </citation>
    <scope>GENE FAMILY</scope>
    <scope>NOMENCLATURE</scope>
</reference>
<reference key="4">
    <citation type="journal article" date="2003" name="Plant Cell Physiol.">
        <title>Diurnal regulation of water transport and aquaporin gene expression in maize roots: contribution of PIP2 proteins.</title>
        <authorList>
            <person name="Lopez F."/>
            <person name="Bousser A."/>
            <person name="Sissoeff I."/>
            <person name="Gaspar M."/>
            <person name="Lachaise B."/>
            <person name="Hoarau J."/>
            <person name="Mahe A."/>
        </authorList>
    </citation>
    <scope>INDUCTION</scope>
</reference>
<reference key="5">
    <citation type="journal article" date="2004" name="Plant Cell">
        <title>Interactions between plasma membrane aquaporins modulate their water channel activity.</title>
        <authorList>
            <person name="Fetter K."/>
            <person name="van Wilder V."/>
            <person name="Moshelion M."/>
            <person name="Chaumont F."/>
        </authorList>
    </citation>
    <scope>FUNCTION</scope>
    <scope>SUBUNIT</scope>
    <scope>MUTAGENESIS OF VAL-245; GLN-249; HIS-250 AND ALA-254</scope>
</reference>